<accession>Q83IP5</accession>
<accession>Q7UBC9</accession>
<feature type="signal peptide" evidence="1">
    <location>
        <begin position="1"/>
        <end position="24"/>
    </location>
</feature>
<feature type="chain" id="PRO_0000290223" description="Maltoporin">
    <location>
        <begin position="25"/>
        <end position="445"/>
    </location>
</feature>
<feature type="site" description="Greasy slide, important in sugar transport" evidence="1">
    <location>
        <position position="30"/>
    </location>
</feature>
<feature type="site" description="Greasy slide, important in sugar transport" evidence="1">
    <location>
        <position position="65"/>
    </location>
</feature>
<feature type="site" description="Greasy slide, important in sugar transport" evidence="1">
    <location>
        <position position="98"/>
    </location>
</feature>
<feature type="site" description="Important in sugar transport" evidence="1">
    <location>
        <position position="142"/>
    </location>
</feature>
<feature type="site" description="Greasy slide, important in sugar transport" evidence="1">
    <location>
        <position position="251"/>
    </location>
</feature>
<feature type="site" description="Greasy slide, important in sugar transport" evidence="1">
    <location>
        <position position="382"/>
    </location>
</feature>
<feature type="site" description="Greasy slide, important in sugar transport" evidence="1">
    <location>
        <position position="444"/>
    </location>
</feature>
<comment type="function">
    <text evidence="1">Involved in the transport of maltose and maltodextrins.</text>
</comment>
<comment type="catalytic activity">
    <reaction evidence="1">
        <text>beta-maltose(in) = beta-maltose(out)</text>
        <dbReference type="Rhea" id="RHEA:29731"/>
        <dbReference type="ChEBI" id="CHEBI:18147"/>
    </reaction>
</comment>
<comment type="subunit">
    <text evidence="1">Homotrimer formed of three 18-stranded antiparallel beta-barrels, containing three independent channels.</text>
</comment>
<comment type="subcellular location">
    <subcellularLocation>
        <location evidence="1">Cell outer membrane</location>
        <topology evidence="1">Multi-pass membrane protein</topology>
    </subcellularLocation>
</comment>
<comment type="induction">
    <text evidence="1">By maltose.</text>
</comment>
<comment type="similarity">
    <text evidence="1">Belongs to the porin LamB (TC 1.B.3) family.</text>
</comment>
<protein>
    <recommendedName>
        <fullName evidence="1">Maltoporin</fullName>
    </recommendedName>
    <alternativeName>
        <fullName evidence="1">Maltose-inducible porin</fullName>
    </alternativeName>
</protein>
<gene>
    <name evidence="1" type="primary">lamB</name>
    <name type="ordered locus">SF4169</name>
    <name type="ordered locus">S3562</name>
</gene>
<organism>
    <name type="scientific">Shigella flexneri</name>
    <dbReference type="NCBI Taxonomy" id="623"/>
    <lineage>
        <taxon>Bacteria</taxon>
        <taxon>Pseudomonadati</taxon>
        <taxon>Pseudomonadota</taxon>
        <taxon>Gammaproteobacteria</taxon>
        <taxon>Enterobacterales</taxon>
        <taxon>Enterobacteriaceae</taxon>
        <taxon>Shigella</taxon>
    </lineage>
</organism>
<proteinExistence type="inferred from homology"/>
<name>LAMB_SHIFL</name>
<reference key="1">
    <citation type="journal article" date="2002" name="Nucleic Acids Res.">
        <title>Genome sequence of Shigella flexneri 2a: insights into pathogenicity through comparison with genomes of Escherichia coli K12 and O157.</title>
        <authorList>
            <person name="Jin Q."/>
            <person name="Yuan Z."/>
            <person name="Xu J."/>
            <person name="Wang Y."/>
            <person name="Shen Y."/>
            <person name="Lu W."/>
            <person name="Wang J."/>
            <person name="Liu H."/>
            <person name="Yang J."/>
            <person name="Yang F."/>
            <person name="Zhang X."/>
            <person name="Zhang J."/>
            <person name="Yang G."/>
            <person name="Wu H."/>
            <person name="Qu D."/>
            <person name="Dong J."/>
            <person name="Sun L."/>
            <person name="Xue Y."/>
            <person name="Zhao A."/>
            <person name="Gao Y."/>
            <person name="Zhu J."/>
            <person name="Kan B."/>
            <person name="Ding K."/>
            <person name="Chen S."/>
            <person name="Cheng H."/>
            <person name="Yao Z."/>
            <person name="He B."/>
            <person name="Chen R."/>
            <person name="Ma D."/>
            <person name="Qiang B."/>
            <person name="Wen Y."/>
            <person name="Hou Y."/>
            <person name="Yu J."/>
        </authorList>
    </citation>
    <scope>NUCLEOTIDE SEQUENCE [LARGE SCALE GENOMIC DNA]</scope>
    <source>
        <strain>301 / Serotype 2a</strain>
    </source>
</reference>
<reference key="2">
    <citation type="journal article" date="2003" name="Infect. Immun.">
        <title>Complete genome sequence and comparative genomics of Shigella flexneri serotype 2a strain 2457T.</title>
        <authorList>
            <person name="Wei J."/>
            <person name="Goldberg M.B."/>
            <person name="Burland V."/>
            <person name="Venkatesan M.M."/>
            <person name="Deng W."/>
            <person name="Fournier G."/>
            <person name="Mayhew G.F."/>
            <person name="Plunkett G. III"/>
            <person name="Rose D.J."/>
            <person name="Darling A."/>
            <person name="Mau B."/>
            <person name="Perna N.T."/>
            <person name="Payne S.M."/>
            <person name="Runyen-Janecky L.J."/>
            <person name="Zhou S."/>
            <person name="Schwartz D.C."/>
            <person name="Blattner F.R."/>
        </authorList>
    </citation>
    <scope>NUCLEOTIDE SEQUENCE [LARGE SCALE GENOMIC DNA]</scope>
    <source>
        <strain>ATCC 700930 / 2457T / Serotype 2a</strain>
    </source>
</reference>
<keyword id="KW-0998">Cell outer membrane</keyword>
<keyword id="KW-0406">Ion transport</keyword>
<keyword id="KW-0472">Membrane</keyword>
<keyword id="KW-0626">Porin</keyword>
<keyword id="KW-1185">Reference proteome</keyword>
<keyword id="KW-0732">Signal</keyword>
<keyword id="KW-0762">Sugar transport</keyword>
<keyword id="KW-0812">Transmembrane</keyword>
<keyword id="KW-1134">Transmembrane beta strand</keyword>
<keyword id="KW-0813">Transport</keyword>
<evidence type="ECO:0000255" key="1">
    <source>
        <dbReference type="HAMAP-Rule" id="MF_01301"/>
    </source>
</evidence>
<dbReference type="EMBL" id="AE005674">
    <property type="protein sequence ID" value="AAN45590.2"/>
    <property type="molecule type" value="Genomic_DNA"/>
</dbReference>
<dbReference type="EMBL" id="AE014073">
    <property type="protein sequence ID" value="AAP18609.1"/>
    <property type="molecule type" value="Genomic_DNA"/>
</dbReference>
<dbReference type="RefSeq" id="NP_709883.2">
    <property type="nucleotide sequence ID" value="NC_004337.2"/>
</dbReference>
<dbReference type="SMR" id="Q83IP5"/>
<dbReference type="STRING" id="198214.SF4169"/>
<dbReference type="PaxDb" id="198214-SF4169"/>
<dbReference type="GeneID" id="1024752"/>
<dbReference type="KEGG" id="sfl:SF4169"/>
<dbReference type="KEGG" id="sfx:S3562"/>
<dbReference type="PATRIC" id="fig|198214.7.peg.4919"/>
<dbReference type="HOGENOM" id="CLU_032473_4_1_6"/>
<dbReference type="Proteomes" id="UP000001006">
    <property type="component" value="Chromosome"/>
</dbReference>
<dbReference type="Proteomes" id="UP000002673">
    <property type="component" value="Chromosome"/>
</dbReference>
<dbReference type="GO" id="GO:0009279">
    <property type="term" value="C:cell outer membrane"/>
    <property type="evidence" value="ECO:0007669"/>
    <property type="project" value="UniProtKB-SubCell"/>
</dbReference>
<dbReference type="GO" id="GO:0046930">
    <property type="term" value="C:pore complex"/>
    <property type="evidence" value="ECO:0007669"/>
    <property type="project" value="UniProtKB-KW"/>
</dbReference>
<dbReference type="GO" id="GO:0042958">
    <property type="term" value="F:maltodextrin transmembrane transporter activity"/>
    <property type="evidence" value="ECO:0007669"/>
    <property type="project" value="InterPro"/>
</dbReference>
<dbReference type="GO" id="GO:0015481">
    <property type="term" value="F:maltose transporting porin activity"/>
    <property type="evidence" value="ECO:0007669"/>
    <property type="project" value="InterPro"/>
</dbReference>
<dbReference type="GO" id="GO:0006811">
    <property type="term" value="P:monoatomic ion transport"/>
    <property type="evidence" value="ECO:0007669"/>
    <property type="project" value="UniProtKB-KW"/>
</dbReference>
<dbReference type="CDD" id="cd01346">
    <property type="entry name" value="Maltoporin-like"/>
    <property type="match status" value="1"/>
</dbReference>
<dbReference type="FunFam" id="2.40.170.10:FF:000001">
    <property type="entry name" value="Maltoporin"/>
    <property type="match status" value="1"/>
</dbReference>
<dbReference type="Gene3D" id="2.40.170.10">
    <property type="entry name" value="Porin, LamB type"/>
    <property type="match status" value="1"/>
</dbReference>
<dbReference type="HAMAP" id="MF_01301">
    <property type="entry name" value="LamB"/>
    <property type="match status" value="1"/>
</dbReference>
<dbReference type="InterPro" id="IPR050286">
    <property type="entry name" value="G_neg_Bact_CarbUptk_Porin"/>
</dbReference>
<dbReference type="InterPro" id="IPR023738">
    <property type="entry name" value="Maltoporin"/>
</dbReference>
<dbReference type="InterPro" id="IPR003192">
    <property type="entry name" value="Porin_LamB"/>
</dbReference>
<dbReference type="InterPro" id="IPR036998">
    <property type="entry name" value="Porin_LamB_sf"/>
</dbReference>
<dbReference type="NCBIfam" id="NF006860">
    <property type="entry name" value="PRK09360.1"/>
    <property type="match status" value="1"/>
</dbReference>
<dbReference type="PANTHER" id="PTHR38762">
    <property type="entry name" value="CRYPTIC OUTER MEMBRANE PORIN BGLH-RELATED"/>
    <property type="match status" value="1"/>
</dbReference>
<dbReference type="PANTHER" id="PTHR38762:SF1">
    <property type="entry name" value="CRYPTIC OUTER MEMBRANE PORIN BGLH-RELATED"/>
    <property type="match status" value="1"/>
</dbReference>
<dbReference type="Pfam" id="PF02264">
    <property type="entry name" value="LamB"/>
    <property type="match status" value="1"/>
</dbReference>
<dbReference type="SUPFAM" id="SSF56935">
    <property type="entry name" value="Porins"/>
    <property type="match status" value="1"/>
</dbReference>
<sequence length="445" mass="49851">MITLRKLPLAVAVAAGVMSAQAMAVDFHGYARSGIGWTGSGGEQQCFQTTGAQSKYRLGNECETYAELKLGQEVWKEGDKSFYFDTNVAYSVAQQNDWEATDPAFREANVQGKNLIEWLPGSTIWAGKRFYQRHDVHMIDFYYWDISGPGAGLENIDVGFGKLSLAATRSSEAGGSSSFASNNIYDYTNETANDVFDVRLAQMEINPGGTLELGVDYGRANLRDNYRLVDGASKDGWLFTAEHTQSVLKGFNKFVVQYATDSMTSQGKGLSQGSGVAFDNEKFAYNINNNGHMLRILDHGAISMGDNWDMMYVGMYQDINWDNDNGTKWWTVGIRPMYKWTPIMSTVMEIGYDNVESQRTGDKNNQYKITLAQQWQAGDSIWSRPAIRVFATYAKWDEKWGYDYNGDSKVNPNYGKAVPADFNGGSFGRGDSDEWTFGAQMEIWW</sequence>